<evidence type="ECO:0000255" key="1">
    <source>
        <dbReference type="HAMAP-Rule" id="MF_01365"/>
    </source>
</evidence>
<evidence type="ECO:0000305" key="2"/>
<gene>
    <name evidence="1" type="primary">rplF</name>
    <name type="ordered locus">ECA4016</name>
</gene>
<protein>
    <recommendedName>
        <fullName evidence="1">Large ribosomal subunit protein uL6</fullName>
    </recommendedName>
    <alternativeName>
        <fullName evidence="2">50S ribosomal protein L6</fullName>
    </alternativeName>
</protein>
<organism>
    <name type="scientific">Pectobacterium atrosepticum (strain SCRI 1043 / ATCC BAA-672)</name>
    <name type="common">Erwinia carotovora subsp. atroseptica</name>
    <dbReference type="NCBI Taxonomy" id="218491"/>
    <lineage>
        <taxon>Bacteria</taxon>
        <taxon>Pseudomonadati</taxon>
        <taxon>Pseudomonadota</taxon>
        <taxon>Gammaproteobacteria</taxon>
        <taxon>Enterobacterales</taxon>
        <taxon>Pectobacteriaceae</taxon>
        <taxon>Pectobacterium</taxon>
    </lineage>
</organism>
<reference key="1">
    <citation type="journal article" date="2004" name="Proc. Natl. Acad. Sci. U.S.A.">
        <title>Genome sequence of the enterobacterial phytopathogen Erwinia carotovora subsp. atroseptica and characterization of virulence factors.</title>
        <authorList>
            <person name="Bell K.S."/>
            <person name="Sebaihia M."/>
            <person name="Pritchard L."/>
            <person name="Holden M.T.G."/>
            <person name="Hyman L.J."/>
            <person name="Holeva M.C."/>
            <person name="Thomson N.R."/>
            <person name="Bentley S.D."/>
            <person name="Churcher L.J.C."/>
            <person name="Mungall K."/>
            <person name="Atkin R."/>
            <person name="Bason N."/>
            <person name="Brooks K."/>
            <person name="Chillingworth T."/>
            <person name="Clark K."/>
            <person name="Doggett J."/>
            <person name="Fraser A."/>
            <person name="Hance Z."/>
            <person name="Hauser H."/>
            <person name="Jagels K."/>
            <person name="Moule S."/>
            <person name="Norbertczak H."/>
            <person name="Ormond D."/>
            <person name="Price C."/>
            <person name="Quail M.A."/>
            <person name="Sanders M."/>
            <person name="Walker D."/>
            <person name="Whitehead S."/>
            <person name="Salmond G.P.C."/>
            <person name="Birch P.R.J."/>
            <person name="Parkhill J."/>
            <person name="Toth I.K."/>
        </authorList>
    </citation>
    <scope>NUCLEOTIDE SEQUENCE [LARGE SCALE GENOMIC DNA]</scope>
    <source>
        <strain>SCRI 1043 / ATCC BAA-672</strain>
    </source>
</reference>
<comment type="function">
    <text evidence="1">This protein binds to the 23S rRNA, and is important in its secondary structure. It is located near the subunit interface in the base of the L7/L12 stalk, and near the tRNA binding site of the peptidyltransferase center.</text>
</comment>
<comment type="subunit">
    <text evidence="1">Part of the 50S ribosomal subunit.</text>
</comment>
<comment type="similarity">
    <text evidence="1">Belongs to the universal ribosomal protein uL6 family.</text>
</comment>
<sequence length="177" mass="18959">MSRVAKAPVVIPAGVEVKLNGQDISIKGKNGELSRKIHNAVEVKQADNALTFAPREGFVDGWAQAGTTRALLNAMVIGVTEGFTKKLQLVGVGYRAAVKGNMVNLSLGFSHPVEHALPAGITAECPSQTEIVLKGADKQVIGQVAAELRAYRRPEPYKGKGVRYADEVVRTKEAKKK</sequence>
<accession>Q6CZY5</accession>
<dbReference type="EMBL" id="BX950851">
    <property type="protein sequence ID" value="CAG76913.1"/>
    <property type="molecule type" value="Genomic_DNA"/>
</dbReference>
<dbReference type="RefSeq" id="WP_011095502.1">
    <property type="nucleotide sequence ID" value="NC_004547.2"/>
</dbReference>
<dbReference type="SMR" id="Q6CZY5"/>
<dbReference type="STRING" id="218491.ECA4016"/>
<dbReference type="GeneID" id="57210680"/>
<dbReference type="KEGG" id="eca:ECA4016"/>
<dbReference type="PATRIC" id="fig|218491.5.peg.4082"/>
<dbReference type="eggNOG" id="COG0097">
    <property type="taxonomic scope" value="Bacteria"/>
</dbReference>
<dbReference type="HOGENOM" id="CLU_065464_1_2_6"/>
<dbReference type="OrthoDB" id="9805007at2"/>
<dbReference type="Proteomes" id="UP000007966">
    <property type="component" value="Chromosome"/>
</dbReference>
<dbReference type="GO" id="GO:0022625">
    <property type="term" value="C:cytosolic large ribosomal subunit"/>
    <property type="evidence" value="ECO:0007669"/>
    <property type="project" value="TreeGrafter"/>
</dbReference>
<dbReference type="GO" id="GO:0019843">
    <property type="term" value="F:rRNA binding"/>
    <property type="evidence" value="ECO:0007669"/>
    <property type="project" value="UniProtKB-UniRule"/>
</dbReference>
<dbReference type="GO" id="GO:0003735">
    <property type="term" value="F:structural constituent of ribosome"/>
    <property type="evidence" value="ECO:0007669"/>
    <property type="project" value="InterPro"/>
</dbReference>
<dbReference type="GO" id="GO:0002181">
    <property type="term" value="P:cytoplasmic translation"/>
    <property type="evidence" value="ECO:0007669"/>
    <property type="project" value="TreeGrafter"/>
</dbReference>
<dbReference type="FunFam" id="3.90.930.12:FF:000001">
    <property type="entry name" value="50S ribosomal protein L6"/>
    <property type="match status" value="1"/>
</dbReference>
<dbReference type="FunFam" id="3.90.930.12:FF:000002">
    <property type="entry name" value="50S ribosomal protein L6"/>
    <property type="match status" value="1"/>
</dbReference>
<dbReference type="Gene3D" id="3.90.930.12">
    <property type="entry name" value="Ribosomal protein L6, alpha-beta domain"/>
    <property type="match status" value="2"/>
</dbReference>
<dbReference type="HAMAP" id="MF_01365_B">
    <property type="entry name" value="Ribosomal_uL6_B"/>
    <property type="match status" value="1"/>
</dbReference>
<dbReference type="InterPro" id="IPR000702">
    <property type="entry name" value="Ribosomal_uL6-like"/>
</dbReference>
<dbReference type="InterPro" id="IPR036789">
    <property type="entry name" value="Ribosomal_uL6-like_a/b-dom_sf"/>
</dbReference>
<dbReference type="InterPro" id="IPR020040">
    <property type="entry name" value="Ribosomal_uL6_a/b-dom"/>
</dbReference>
<dbReference type="InterPro" id="IPR019906">
    <property type="entry name" value="Ribosomal_uL6_bac-type"/>
</dbReference>
<dbReference type="InterPro" id="IPR002358">
    <property type="entry name" value="Ribosomal_uL6_CS"/>
</dbReference>
<dbReference type="NCBIfam" id="TIGR03654">
    <property type="entry name" value="L6_bact"/>
    <property type="match status" value="1"/>
</dbReference>
<dbReference type="PANTHER" id="PTHR11655">
    <property type="entry name" value="60S/50S RIBOSOMAL PROTEIN L6/L9"/>
    <property type="match status" value="1"/>
</dbReference>
<dbReference type="PANTHER" id="PTHR11655:SF14">
    <property type="entry name" value="LARGE RIBOSOMAL SUBUNIT PROTEIN UL6M"/>
    <property type="match status" value="1"/>
</dbReference>
<dbReference type="Pfam" id="PF00347">
    <property type="entry name" value="Ribosomal_L6"/>
    <property type="match status" value="2"/>
</dbReference>
<dbReference type="PIRSF" id="PIRSF002162">
    <property type="entry name" value="Ribosomal_L6"/>
    <property type="match status" value="1"/>
</dbReference>
<dbReference type="PRINTS" id="PR00059">
    <property type="entry name" value="RIBOSOMALL6"/>
</dbReference>
<dbReference type="SUPFAM" id="SSF56053">
    <property type="entry name" value="Ribosomal protein L6"/>
    <property type="match status" value="2"/>
</dbReference>
<dbReference type="PROSITE" id="PS00525">
    <property type="entry name" value="RIBOSOMAL_L6_1"/>
    <property type="match status" value="1"/>
</dbReference>
<keyword id="KW-1185">Reference proteome</keyword>
<keyword id="KW-0687">Ribonucleoprotein</keyword>
<keyword id="KW-0689">Ribosomal protein</keyword>
<keyword id="KW-0694">RNA-binding</keyword>
<keyword id="KW-0699">rRNA-binding</keyword>
<name>RL6_PECAS</name>
<feature type="chain" id="PRO_0000265250" description="Large ribosomal subunit protein uL6">
    <location>
        <begin position="1"/>
        <end position="177"/>
    </location>
</feature>
<proteinExistence type="inferred from homology"/>